<proteinExistence type="evidence at transcript level"/>
<comment type="function">
    <text evidence="1">Catalyzes the oxidation of uric acid to 5-hydroxyisourate, which is further processed to form (S)-allantoin.</text>
</comment>
<comment type="catalytic activity">
    <reaction>
        <text>urate + O2 + H2O = 5-hydroxyisourate + H2O2</text>
        <dbReference type="Rhea" id="RHEA:21368"/>
        <dbReference type="ChEBI" id="CHEBI:15377"/>
        <dbReference type="ChEBI" id="CHEBI:15379"/>
        <dbReference type="ChEBI" id="CHEBI:16240"/>
        <dbReference type="ChEBI" id="CHEBI:17775"/>
        <dbReference type="ChEBI" id="CHEBI:18072"/>
        <dbReference type="EC" id="1.7.3.3"/>
    </reaction>
</comment>
<comment type="pathway">
    <text>Purine metabolism; urate degradation; (S)-allantoin from urate: step 1/3.</text>
</comment>
<comment type="subcellular location">
    <subcellularLocation>
        <location evidence="1">Peroxisome</location>
    </subcellularLocation>
</comment>
<comment type="similarity">
    <text evidence="5">Belongs to the uricase family.</text>
</comment>
<sequence>MAKEIVGGFKFDQRHGKERVQVARVWKTKQGWYFIVEWRVGNSLLSDCVNSYVRDDNSDIVATDTMKNTVYAKAKECSEILSVEDFAILLAKHFISFYKQVTAAIVNIVEKPWERVSVDGQPHEHGFKLGSERHTAEAIVQKSGALQLTSGIEGLSLLKTTKSGFEGFIRDKYTALPETHERMLATEVTALWRYSYESLYSIPQKPLYFTDKYLEVKKVLADNFFGPPNVGVYSPSVQNTLYLMAKAALNRFPEIASIQLKMPNIHFLPVNISNKDGPIVKFEADVYLPTDEPHGSIQASLRRLWSKL</sequence>
<protein>
    <recommendedName>
        <fullName>Uricase-2 isozyme 1</fullName>
        <ecNumber>1.7.3.3</ecNumber>
    </recommendedName>
    <alternativeName>
        <fullName>Urate oxidase</fullName>
    </alternativeName>
    <alternativeName>
        <fullName>Uricase II clone pcClNUO-01</fullName>
    </alternativeName>
</protein>
<keyword id="KW-0536">Nodulation</keyword>
<keyword id="KW-0560">Oxidoreductase</keyword>
<keyword id="KW-0576">Peroxisome</keyword>
<keyword id="KW-0659">Purine metabolism</keyword>
<accession>P34798</accession>
<feature type="chain" id="PRO_0000166000" description="Uricase-2 isozyme 1">
    <location>
        <begin position="1"/>
        <end position="308"/>
    </location>
</feature>
<feature type="short sequence motif" description="Microbody targeting signal" evidence="4">
    <location>
        <begin position="306"/>
        <end position="308"/>
    </location>
</feature>
<feature type="active site" description="Charge relay system" evidence="2">
    <location>
        <position position="17"/>
    </location>
</feature>
<feature type="active site" description="Charge relay system" evidence="2">
    <location>
        <position position="63"/>
    </location>
</feature>
<feature type="active site" description="Charge relay system" evidence="2">
    <location>
        <position position="266"/>
    </location>
</feature>
<feature type="binding site" evidence="3">
    <location>
        <position position="63"/>
    </location>
    <ligand>
        <name>urate</name>
        <dbReference type="ChEBI" id="CHEBI:17775"/>
    </ligand>
</feature>
<feature type="binding site" evidence="3">
    <location>
        <position position="64"/>
    </location>
    <ligand>
        <name>urate</name>
        <dbReference type="ChEBI" id="CHEBI:17775"/>
    </ligand>
</feature>
<feature type="binding site" evidence="3">
    <location>
        <position position="165"/>
    </location>
    <ligand>
        <name>urate</name>
        <dbReference type="ChEBI" id="CHEBI:17775"/>
    </ligand>
</feature>
<feature type="binding site" evidence="3">
    <location>
        <position position="182"/>
    </location>
    <ligand>
        <name>urate</name>
        <dbReference type="ChEBI" id="CHEBI:17775"/>
    </ligand>
</feature>
<feature type="binding site" evidence="3">
    <location>
        <position position="237"/>
    </location>
    <ligand>
        <name>urate</name>
        <dbReference type="ChEBI" id="CHEBI:17775"/>
    </ligand>
</feature>
<feature type="binding site" evidence="3">
    <location>
        <position position="238"/>
    </location>
    <ligand>
        <name>urate</name>
        <dbReference type="ChEBI" id="CHEBI:17775"/>
    </ligand>
</feature>
<feature type="binding site" evidence="3">
    <location>
        <position position="264"/>
    </location>
    <ligand>
        <name>urate</name>
        <dbReference type="ChEBI" id="CHEBI:17775"/>
    </ligand>
</feature>
<name>URIC1_CANLI</name>
<organism>
    <name type="scientific">Canavalia lineata</name>
    <name type="common">Beach bean</name>
    <name type="synonym">Dolichos lineatus</name>
    <dbReference type="NCBI Taxonomy" id="28957"/>
    <lineage>
        <taxon>Eukaryota</taxon>
        <taxon>Viridiplantae</taxon>
        <taxon>Streptophyta</taxon>
        <taxon>Embryophyta</taxon>
        <taxon>Tracheophyta</taxon>
        <taxon>Spermatophyta</taxon>
        <taxon>Magnoliopsida</taxon>
        <taxon>eudicotyledons</taxon>
        <taxon>Gunneridae</taxon>
        <taxon>Pentapetalae</taxon>
        <taxon>rosids</taxon>
        <taxon>fabids</taxon>
        <taxon>Fabales</taxon>
        <taxon>Fabaceae</taxon>
        <taxon>Papilionoideae</taxon>
        <taxon>50 kb inversion clade</taxon>
        <taxon>NPAAA clade</taxon>
        <taxon>indigoferoid/millettioid clade</taxon>
        <taxon>Phaseoleae</taxon>
        <taxon>Canavalia</taxon>
    </lineage>
</organism>
<dbReference type="EC" id="1.7.3.3"/>
<dbReference type="EMBL" id="X76286">
    <property type="protein sequence ID" value="CAA53904.1"/>
    <property type="molecule type" value="mRNA"/>
</dbReference>
<dbReference type="PIR" id="S38911">
    <property type="entry name" value="S38911"/>
</dbReference>
<dbReference type="SMR" id="P34798"/>
<dbReference type="UniPathway" id="UPA00394">
    <property type="reaction ID" value="UER00650"/>
</dbReference>
<dbReference type="GO" id="GO:0005777">
    <property type="term" value="C:peroxisome"/>
    <property type="evidence" value="ECO:0007669"/>
    <property type="project" value="UniProtKB-SubCell"/>
</dbReference>
<dbReference type="GO" id="GO:0004846">
    <property type="term" value="F:urate oxidase activity"/>
    <property type="evidence" value="ECO:0007669"/>
    <property type="project" value="UniProtKB-EC"/>
</dbReference>
<dbReference type="GO" id="GO:0009877">
    <property type="term" value="P:nodulation"/>
    <property type="evidence" value="ECO:0007669"/>
    <property type="project" value="UniProtKB-KW"/>
</dbReference>
<dbReference type="GO" id="GO:0006145">
    <property type="term" value="P:purine nucleobase catabolic process"/>
    <property type="evidence" value="ECO:0007669"/>
    <property type="project" value="TreeGrafter"/>
</dbReference>
<dbReference type="GO" id="GO:0019628">
    <property type="term" value="P:urate catabolic process"/>
    <property type="evidence" value="ECO:0007669"/>
    <property type="project" value="UniProtKB-UniPathway"/>
</dbReference>
<dbReference type="CDD" id="cd00445">
    <property type="entry name" value="Uricase"/>
    <property type="match status" value="1"/>
</dbReference>
<dbReference type="FunFam" id="3.10.270.10:FF:000001">
    <property type="entry name" value="Uricase"/>
    <property type="match status" value="1"/>
</dbReference>
<dbReference type="Gene3D" id="3.10.270.10">
    <property type="entry name" value="Urate Oxidase"/>
    <property type="match status" value="1"/>
</dbReference>
<dbReference type="InterPro" id="IPR002042">
    <property type="entry name" value="Uricase"/>
</dbReference>
<dbReference type="InterPro" id="IPR019842">
    <property type="entry name" value="Uricase_CS"/>
</dbReference>
<dbReference type="NCBIfam" id="TIGR03383">
    <property type="entry name" value="urate_oxi"/>
    <property type="match status" value="1"/>
</dbReference>
<dbReference type="PANTHER" id="PTHR42874">
    <property type="entry name" value="URICASE"/>
    <property type="match status" value="1"/>
</dbReference>
<dbReference type="PANTHER" id="PTHR42874:SF1">
    <property type="entry name" value="URICASE"/>
    <property type="match status" value="1"/>
</dbReference>
<dbReference type="Pfam" id="PF01014">
    <property type="entry name" value="Uricase"/>
    <property type="match status" value="2"/>
</dbReference>
<dbReference type="PIRSF" id="PIRSF000241">
    <property type="entry name" value="Urate_oxidase"/>
    <property type="match status" value="1"/>
</dbReference>
<dbReference type="PRINTS" id="PR00093">
    <property type="entry name" value="URICASE"/>
</dbReference>
<dbReference type="SUPFAM" id="SSF55620">
    <property type="entry name" value="Tetrahydrobiopterin biosynthesis enzymes-like"/>
    <property type="match status" value="2"/>
</dbReference>
<dbReference type="PROSITE" id="PS00366">
    <property type="entry name" value="URICASE"/>
    <property type="match status" value="1"/>
</dbReference>
<evidence type="ECO:0000250" key="1"/>
<evidence type="ECO:0000250" key="2">
    <source>
        <dbReference type="UniProtKB" id="D0VWQ1"/>
    </source>
</evidence>
<evidence type="ECO:0000250" key="3">
    <source>
        <dbReference type="UniProtKB" id="Q00511"/>
    </source>
</evidence>
<evidence type="ECO:0000255" key="4"/>
<evidence type="ECO:0000305" key="5"/>
<reference key="1">
    <citation type="journal article" date="1993" name="Singmul Hakhoe Chi">
        <title>Nucleotide sequence and expression of cDNA clones encoding uricase II in Canavalia lineata.</title>
        <authorList>
            <person name="Bang K.H."/>
            <person name="An C.S."/>
        </authorList>
    </citation>
    <scope>NUCLEOTIDE SEQUENCE [MRNA]</scope>
    <source>
        <tissue>Root nodule</tissue>
    </source>
</reference>